<accession>Q8CDG1</accession>
<accession>A6H617</accession>
<accession>Q3TQE8</accession>
<accession>Q99MV6</accession>
<accession>Q9JMB6</accession>
<organism>
    <name type="scientific">Mus musculus</name>
    <name type="common">Mouse</name>
    <dbReference type="NCBI Taxonomy" id="10090"/>
    <lineage>
        <taxon>Eukaryota</taxon>
        <taxon>Metazoa</taxon>
        <taxon>Chordata</taxon>
        <taxon>Craniata</taxon>
        <taxon>Vertebrata</taxon>
        <taxon>Euteleostomi</taxon>
        <taxon>Mammalia</taxon>
        <taxon>Eutheria</taxon>
        <taxon>Euarchontoglires</taxon>
        <taxon>Glires</taxon>
        <taxon>Rodentia</taxon>
        <taxon>Myomorpha</taxon>
        <taxon>Muroidea</taxon>
        <taxon>Muridae</taxon>
        <taxon>Murinae</taxon>
        <taxon>Mus</taxon>
        <taxon>Mus</taxon>
    </lineage>
</organism>
<protein>
    <recommendedName>
        <fullName evidence="37">Piwi-like protein 2</fullName>
        <ecNumber evidence="25 28 30">3.1.26.-</ecNumber>
    </recommendedName>
</protein>
<name>PIWL2_MOUSE</name>
<evidence type="ECO:0000250" key="1">
    <source>
        <dbReference type="UniProtKB" id="A8D8P8"/>
    </source>
</evidence>
<evidence type="ECO:0000250" key="2">
    <source>
        <dbReference type="UniProtKB" id="Q9JMB7"/>
    </source>
</evidence>
<evidence type="ECO:0000255" key="3">
    <source>
        <dbReference type="PROSITE-ProRule" id="PRU00142"/>
    </source>
</evidence>
<evidence type="ECO:0000255" key="4">
    <source>
        <dbReference type="PROSITE-ProRule" id="PRU00150"/>
    </source>
</evidence>
<evidence type="ECO:0000256" key="5">
    <source>
        <dbReference type="SAM" id="MobiDB-lite"/>
    </source>
</evidence>
<evidence type="ECO:0000269" key="6">
    <source>
    </source>
</evidence>
<evidence type="ECO:0000269" key="7">
    <source>
    </source>
</evidence>
<evidence type="ECO:0000269" key="8">
    <source>
    </source>
</evidence>
<evidence type="ECO:0000269" key="9">
    <source>
    </source>
</evidence>
<evidence type="ECO:0000269" key="10">
    <source>
    </source>
</evidence>
<evidence type="ECO:0000269" key="11">
    <source>
    </source>
</evidence>
<evidence type="ECO:0000269" key="12">
    <source>
    </source>
</evidence>
<evidence type="ECO:0000269" key="13">
    <source>
    </source>
</evidence>
<evidence type="ECO:0000269" key="14">
    <source>
    </source>
</evidence>
<evidence type="ECO:0000269" key="15">
    <source>
    </source>
</evidence>
<evidence type="ECO:0000269" key="16">
    <source>
    </source>
</evidence>
<evidence type="ECO:0000269" key="17">
    <source>
    </source>
</evidence>
<evidence type="ECO:0000269" key="18">
    <source>
    </source>
</evidence>
<evidence type="ECO:0000269" key="19">
    <source>
    </source>
</evidence>
<evidence type="ECO:0000269" key="20">
    <source>
    </source>
</evidence>
<evidence type="ECO:0000269" key="21">
    <source>
    </source>
</evidence>
<evidence type="ECO:0000269" key="22">
    <source>
    </source>
</evidence>
<evidence type="ECO:0000269" key="23">
    <source>
    </source>
</evidence>
<evidence type="ECO:0000269" key="24">
    <source>
    </source>
</evidence>
<evidence type="ECO:0000269" key="25">
    <source>
    </source>
</evidence>
<evidence type="ECO:0000269" key="26">
    <source>
    </source>
</evidence>
<evidence type="ECO:0000269" key="27">
    <source>
    </source>
</evidence>
<evidence type="ECO:0000269" key="28">
    <source>
    </source>
</evidence>
<evidence type="ECO:0000269" key="29">
    <source>
    </source>
</evidence>
<evidence type="ECO:0000269" key="30">
    <source>
    </source>
</evidence>
<evidence type="ECO:0000269" key="31">
    <source>
    </source>
</evidence>
<evidence type="ECO:0000269" key="32">
    <source>
    </source>
</evidence>
<evidence type="ECO:0000269" key="33">
    <source>
    </source>
</evidence>
<evidence type="ECO:0000269" key="34">
    <source>
    </source>
</evidence>
<evidence type="ECO:0000303" key="35">
    <source>
    </source>
</evidence>
<evidence type="ECO:0000303" key="36">
    <source>
    </source>
</evidence>
<evidence type="ECO:0000305" key="37"/>
<evidence type="ECO:0000305" key="38">
    <source>
    </source>
</evidence>
<evidence type="ECO:0000312" key="39">
    <source>
        <dbReference type="MGI" id="MGI:1930036"/>
    </source>
</evidence>
<evidence type="ECO:0007829" key="40">
    <source>
        <dbReference type="PDB" id="7YGN"/>
    </source>
</evidence>
<evidence type="ECO:0007829" key="41">
    <source>
        <dbReference type="PDB" id="9IJ3"/>
    </source>
</evidence>
<evidence type="ECO:0007829" key="42">
    <source>
        <dbReference type="PDB" id="9IJ5"/>
    </source>
</evidence>
<gene>
    <name evidence="39" type="primary">Piwil2</name>
    <name evidence="35 36" type="synonym">Mili</name>
</gene>
<feature type="chain" id="PRO_0000234570" description="Piwi-like protein 2">
    <location>
        <begin position="1"/>
        <end position="971"/>
    </location>
</feature>
<feature type="domain" description="PAZ" evidence="3">
    <location>
        <begin position="387"/>
        <end position="500"/>
    </location>
</feature>
<feature type="domain" description="Piwi" evidence="4">
    <location>
        <begin position="666"/>
        <end position="957"/>
    </location>
</feature>
<feature type="region of interest" description="Disordered" evidence="5">
    <location>
        <begin position="102"/>
        <end position="124"/>
    </location>
</feature>
<feature type="region of interest" description="Disordered" evidence="5">
    <location>
        <begin position="159"/>
        <end position="200"/>
    </location>
</feature>
<feature type="active site" evidence="1">
    <location>
        <position position="743"/>
    </location>
</feature>
<feature type="active site" evidence="1">
    <location>
        <position position="781"/>
    </location>
</feature>
<feature type="active site" evidence="1">
    <location>
        <position position="813"/>
    </location>
</feature>
<feature type="active site" evidence="1">
    <location>
        <position position="946"/>
    </location>
</feature>
<feature type="modified residue" description="Symmetric dimethylarginine" evidence="21 26">
    <location>
        <position position="45"/>
    </location>
</feature>
<feature type="modified residue" description="Omega-N-methylarginine; by PRMT5; alternate" evidence="19 20 21 26">
    <location>
        <position position="74"/>
    </location>
</feature>
<feature type="modified residue" description="Symmetric dimethylarginine; by PRMT5; alternate" evidence="19 20 21 26">
    <location>
        <position position="74"/>
    </location>
</feature>
<feature type="modified residue" description="Omega-N-methylarginine; alternate" evidence="21">
    <location>
        <position position="83"/>
    </location>
</feature>
<feature type="modified residue" description="Symmetric dimethylarginine; alternate" evidence="38">
    <location>
        <position position="83"/>
    </location>
</feature>
<feature type="modified residue" description="Omega-N-methylarginine; by PRMT5; alternate" evidence="20 21">
    <location>
        <position position="95"/>
    </location>
</feature>
<feature type="modified residue" description="Symmetric dimethylarginine; alternate" evidence="20 21">
    <location>
        <position position="95"/>
    </location>
</feature>
<feature type="modified residue" description="Omega-N-methylarginine; alternate" evidence="20 21">
    <location>
        <position position="100"/>
    </location>
</feature>
<feature type="modified residue" description="Symmetric dimethylarginine; by PRMT5; alternate" evidence="20 21">
    <location>
        <position position="100"/>
    </location>
</feature>
<feature type="modified residue" description="Symmetric dimethylarginine" evidence="38">
    <location>
        <position position="144"/>
    </location>
</feature>
<feature type="modified residue" description="Symmetric dimethylarginine" evidence="38">
    <location>
        <position position="156"/>
    </location>
</feature>
<feature type="modified residue" description="Symmetric dimethylarginine; by PRMT5" evidence="20 21">
    <location>
        <position position="163"/>
    </location>
</feature>
<feature type="modified residue" description="Symmetric dimethylarginine; by PRMT5" evidence="20">
    <location>
        <position position="549"/>
    </location>
</feature>
<feature type="mutagenesis site" description="Abolishes interaction with TDRD1; when associated with K-39; K-45 and K-74." evidence="20">
    <original>R</original>
    <variation>K</variation>
    <location>
        <position position="9"/>
    </location>
</feature>
<feature type="mutagenesis site" description="Abolishes interaction with TDRD1; when associated with K-9; K-45 and K-74." evidence="20">
    <original>R</original>
    <variation>K</variation>
    <location>
        <position position="39"/>
    </location>
</feature>
<feature type="mutagenesis site" description="Abolishes interaction with TDRD1; when associated with K-9; K-39 and K-74." evidence="20">
    <original>R</original>
    <variation>K</variation>
    <location>
        <position position="45"/>
    </location>
</feature>
<feature type="mutagenesis site" description="Abolishes interaction with TDRD1; when associated with K-9; K-39 and K-45." evidence="20">
    <original>R</original>
    <variation>K</variation>
    <location>
        <position position="74"/>
    </location>
</feature>
<feature type="mutagenesis site" description="In DAH mutant; leads to arrest in meiotic prophase due to a failure of transposon piRNA amplification, resulting in the marked reduction of piRNA-bound within PIWIL4." evidence="25 28">
    <original>D</original>
    <variation>A</variation>
    <location>
        <position position="813"/>
    </location>
</feature>
<feature type="sequence conflict" description="In Ref. 2; BAE37436." evidence="37" ref="2">
    <original>Q</original>
    <variation>E</variation>
    <location>
        <position position="517"/>
    </location>
</feature>
<feature type="sequence conflict" description="In Ref. 2; BAC26791." evidence="37" ref="2">
    <original>T</original>
    <variation>A</variation>
    <location>
        <position position="542"/>
    </location>
</feature>
<feature type="sequence conflict" description="In Ref. 5; AAK31965." evidence="37" ref="5">
    <original>D</original>
    <variation>G</variation>
    <location>
        <position position="583"/>
    </location>
</feature>
<feature type="sequence conflict" description="In Ref. 5; AAK31965." evidence="37" ref="5">
    <original>I</original>
    <variation>T</variation>
    <location>
        <position position="634"/>
    </location>
</feature>
<feature type="strand" evidence="42">
    <location>
        <begin position="217"/>
        <end position="225"/>
    </location>
</feature>
<feature type="strand" evidence="41">
    <location>
        <begin position="231"/>
        <end position="233"/>
    </location>
</feature>
<feature type="strand" evidence="41">
    <location>
        <begin position="240"/>
        <end position="247"/>
    </location>
</feature>
<feature type="helix" evidence="41">
    <location>
        <begin position="252"/>
        <end position="261"/>
    </location>
</feature>
<feature type="helix" evidence="41">
    <location>
        <begin position="263"/>
        <end position="266"/>
    </location>
</feature>
<feature type="strand" evidence="41">
    <location>
        <begin position="274"/>
        <end position="278"/>
    </location>
</feature>
<feature type="strand" evidence="41">
    <location>
        <begin position="287"/>
        <end position="292"/>
    </location>
</feature>
<feature type="turn" evidence="41">
    <location>
        <begin position="294"/>
        <end position="296"/>
    </location>
</feature>
<feature type="strand" evidence="41">
    <location>
        <begin position="299"/>
        <end position="304"/>
    </location>
</feature>
<feature type="helix" evidence="41">
    <location>
        <begin position="315"/>
        <end position="317"/>
    </location>
</feature>
<feature type="helix" evidence="41">
    <location>
        <begin position="318"/>
        <end position="330"/>
    </location>
</feature>
<feature type="turn" evidence="41">
    <location>
        <begin position="331"/>
        <end position="333"/>
    </location>
</feature>
<feature type="strand" evidence="41">
    <location>
        <begin position="335"/>
        <end position="337"/>
    </location>
</feature>
<feature type="strand" evidence="41">
    <location>
        <begin position="340"/>
        <end position="342"/>
    </location>
</feature>
<feature type="helix" evidence="41">
    <location>
        <begin position="344"/>
        <end position="346"/>
    </location>
</feature>
<feature type="strand" evidence="42">
    <location>
        <begin position="348"/>
        <end position="350"/>
    </location>
</feature>
<feature type="turn" evidence="41">
    <location>
        <begin position="351"/>
        <end position="354"/>
    </location>
</feature>
<feature type="strand" evidence="41">
    <location>
        <begin position="359"/>
        <end position="361"/>
    </location>
</feature>
<feature type="strand" evidence="41">
    <location>
        <begin position="364"/>
        <end position="368"/>
    </location>
</feature>
<feature type="strand" evidence="41">
    <location>
        <begin position="371"/>
        <end position="375"/>
    </location>
</feature>
<feature type="strand" evidence="41">
    <location>
        <begin position="378"/>
        <end position="380"/>
    </location>
</feature>
<feature type="strand" evidence="41">
    <location>
        <begin position="383"/>
        <end position="387"/>
    </location>
</feature>
<feature type="helix" evidence="41">
    <location>
        <begin position="388"/>
        <end position="398"/>
    </location>
</feature>
<feature type="strand" evidence="41">
    <location>
        <begin position="400"/>
        <end position="402"/>
    </location>
</feature>
<feature type="helix" evidence="41">
    <location>
        <begin position="403"/>
        <end position="411"/>
    </location>
</feature>
<feature type="strand" evidence="41">
    <location>
        <begin position="412"/>
        <end position="418"/>
    </location>
</feature>
<feature type="turn" evidence="41">
    <location>
        <begin position="419"/>
        <end position="422"/>
    </location>
</feature>
<feature type="strand" evidence="41">
    <location>
        <begin position="423"/>
        <end position="426"/>
    </location>
</feature>
<feature type="strand" evidence="41">
    <location>
        <begin position="429"/>
        <end position="433"/>
    </location>
</feature>
<feature type="strand" evidence="41">
    <location>
        <begin position="438"/>
        <end position="441"/>
    </location>
</feature>
<feature type="strand" evidence="41">
    <location>
        <begin position="443"/>
        <end position="445"/>
    </location>
</feature>
<feature type="strand" evidence="41">
    <location>
        <begin position="447"/>
        <end position="449"/>
    </location>
</feature>
<feature type="helix" evidence="41">
    <location>
        <begin position="450"/>
        <end position="456"/>
    </location>
</feature>
<feature type="strand" evidence="41">
    <location>
        <begin position="469"/>
        <end position="471"/>
    </location>
</feature>
<feature type="strand" evidence="42">
    <location>
        <begin position="489"/>
        <end position="491"/>
    </location>
</feature>
<feature type="strand" evidence="41">
    <location>
        <begin position="493"/>
        <end position="498"/>
    </location>
</feature>
<feature type="helix" evidence="41">
    <location>
        <begin position="503"/>
        <end position="507"/>
    </location>
</feature>
<feature type="helix" evidence="41">
    <location>
        <begin position="509"/>
        <end position="518"/>
    </location>
</feature>
<feature type="helix" evidence="41">
    <location>
        <begin position="523"/>
        <end position="539"/>
    </location>
</feature>
<feature type="helix" evidence="41">
    <location>
        <begin position="541"/>
        <end position="549"/>
    </location>
</feature>
<feature type="strand" evidence="40">
    <location>
        <begin position="552"/>
        <end position="554"/>
    </location>
</feature>
<feature type="strand" evidence="42">
    <location>
        <begin position="560"/>
        <end position="565"/>
    </location>
</feature>
<feature type="strand" evidence="40">
    <location>
        <begin position="570"/>
        <end position="572"/>
    </location>
</feature>
<feature type="strand" evidence="40">
    <location>
        <begin position="577"/>
        <end position="579"/>
    </location>
</feature>
<feature type="turn" evidence="41">
    <location>
        <begin position="587"/>
        <end position="589"/>
    </location>
</feature>
<feature type="strand" evidence="42">
    <location>
        <begin position="591"/>
        <end position="593"/>
    </location>
</feature>
<feature type="strand" evidence="42">
    <location>
        <begin position="605"/>
        <end position="608"/>
    </location>
</feature>
<feature type="helix" evidence="41">
    <location>
        <begin position="610"/>
        <end position="612"/>
    </location>
</feature>
<feature type="helix" evidence="41">
    <location>
        <begin position="613"/>
        <end position="627"/>
    </location>
</feature>
<feature type="turn" evidence="41">
    <location>
        <begin position="628"/>
        <end position="631"/>
    </location>
</feature>
<feature type="strand" evidence="42">
    <location>
        <begin position="638"/>
        <end position="641"/>
    </location>
</feature>
<feature type="strand" evidence="42">
    <location>
        <begin position="643"/>
        <end position="646"/>
    </location>
</feature>
<feature type="helix" evidence="41">
    <location>
        <begin position="647"/>
        <end position="660"/>
    </location>
</feature>
<feature type="strand" evidence="41">
    <location>
        <begin position="667"/>
        <end position="673"/>
    </location>
</feature>
<feature type="helix" evidence="41">
    <location>
        <begin position="676"/>
        <end position="687"/>
    </location>
</feature>
<feature type="strand" evidence="41">
    <location>
        <begin position="694"/>
        <end position="698"/>
    </location>
</feature>
<feature type="helix" evidence="41">
    <location>
        <begin position="699"/>
        <end position="702"/>
    </location>
</feature>
<feature type="strand" evidence="42">
    <location>
        <begin position="705"/>
        <end position="707"/>
    </location>
</feature>
<feature type="helix" evidence="41">
    <location>
        <begin position="709"/>
        <end position="722"/>
    </location>
</feature>
<feature type="strand" evidence="41">
    <location>
        <begin position="734"/>
        <end position="745"/>
    </location>
</feature>
<feature type="turn" evidence="42">
    <location>
        <begin position="748"/>
        <end position="751"/>
    </location>
</feature>
<feature type="strand" evidence="41">
    <location>
        <begin position="755"/>
        <end position="761"/>
    </location>
</feature>
<feature type="strand" evidence="41">
    <location>
        <begin position="763"/>
        <end position="765"/>
    </location>
</feature>
<feature type="strand" evidence="41">
    <location>
        <begin position="768"/>
        <end position="775"/>
    </location>
</feature>
<feature type="helix" evidence="41">
    <location>
        <begin position="789"/>
        <end position="801"/>
    </location>
</feature>
<feature type="strand" evidence="41">
    <location>
        <begin position="807"/>
        <end position="812"/>
    </location>
</feature>
<feature type="helix" evidence="42">
    <location>
        <begin position="817"/>
        <end position="819"/>
    </location>
</feature>
<feature type="helix" evidence="41">
    <location>
        <begin position="820"/>
        <end position="824"/>
    </location>
</feature>
<feature type="turn" evidence="41">
    <location>
        <begin position="825"/>
        <end position="827"/>
    </location>
</feature>
<feature type="helix" evidence="41">
    <location>
        <begin position="828"/>
        <end position="831"/>
    </location>
</feature>
<feature type="helix" evidence="41">
    <location>
        <begin position="834"/>
        <end position="836"/>
    </location>
</feature>
<feature type="strand" evidence="41">
    <location>
        <begin position="837"/>
        <end position="840"/>
    </location>
</feature>
<feature type="strand" evidence="41">
    <location>
        <begin position="846"/>
        <end position="851"/>
    </location>
</feature>
<feature type="strand" evidence="41">
    <location>
        <begin position="859"/>
        <end position="861"/>
    </location>
</feature>
<feature type="strand" evidence="41">
    <location>
        <begin position="863"/>
        <end position="867"/>
    </location>
</feature>
<feature type="strand" evidence="41">
    <location>
        <begin position="871"/>
        <end position="875"/>
    </location>
</feature>
<feature type="strand" evidence="41">
    <location>
        <begin position="877"/>
        <end position="880"/>
    </location>
</feature>
<feature type="strand" evidence="41">
    <location>
        <begin position="882"/>
        <end position="890"/>
    </location>
</feature>
<feature type="strand" evidence="40">
    <location>
        <begin position="895"/>
        <end position="897"/>
    </location>
</feature>
<feature type="strand" evidence="41">
    <location>
        <begin position="902"/>
        <end position="909"/>
    </location>
</feature>
<feature type="helix" evidence="41">
    <location>
        <begin position="915"/>
        <end position="927"/>
    </location>
</feature>
<feature type="strand" evidence="41">
    <location>
        <begin position="932"/>
        <end position="934"/>
    </location>
</feature>
<feature type="helix" evidence="41">
    <location>
        <begin position="940"/>
        <end position="954"/>
    </location>
</feature>
<feature type="turn" evidence="41">
    <location>
        <begin position="962"/>
        <end position="970"/>
    </location>
</feature>
<reference key="1">
    <citation type="journal article" date="2001" name="Mech. Dev.">
        <title>Two mouse piwi-related genes: miwi and mili.</title>
        <authorList>
            <person name="Kuramochi-Miyagawa S.K."/>
            <person name="Kimura T."/>
            <person name="Yomogida K."/>
            <person name="Kuroiwa A."/>
            <person name="Tadokoro Y."/>
            <person name="Fujita Y."/>
            <person name="Sato M."/>
            <person name="Matsuda Y."/>
            <person name="Nakano T."/>
        </authorList>
    </citation>
    <scope>NUCLEOTIDE SEQUENCE [MRNA]</scope>
    <scope>TISSUE SPECIFICITY</scope>
    <scope>SUBCELLULAR LOCATION</scope>
    <scope>DEVELOPMENTAL STAGE</scope>
    <scope>FUNCTION</scope>
</reference>
<reference key="2">
    <citation type="journal article" date="2005" name="Science">
        <title>The transcriptional landscape of the mammalian genome.</title>
        <authorList>
            <person name="Carninci P."/>
            <person name="Kasukawa T."/>
            <person name="Katayama S."/>
            <person name="Gough J."/>
            <person name="Frith M.C."/>
            <person name="Maeda N."/>
            <person name="Oyama R."/>
            <person name="Ravasi T."/>
            <person name="Lenhard B."/>
            <person name="Wells C."/>
            <person name="Kodzius R."/>
            <person name="Shimokawa K."/>
            <person name="Bajic V.B."/>
            <person name="Brenner S.E."/>
            <person name="Batalov S."/>
            <person name="Forrest A.R."/>
            <person name="Zavolan M."/>
            <person name="Davis M.J."/>
            <person name="Wilming L.G."/>
            <person name="Aidinis V."/>
            <person name="Allen J.E."/>
            <person name="Ambesi-Impiombato A."/>
            <person name="Apweiler R."/>
            <person name="Aturaliya R.N."/>
            <person name="Bailey T.L."/>
            <person name="Bansal M."/>
            <person name="Baxter L."/>
            <person name="Beisel K.W."/>
            <person name="Bersano T."/>
            <person name="Bono H."/>
            <person name="Chalk A.M."/>
            <person name="Chiu K.P."/>
            <person name="Choudhary V."/>
            <person name="Christoffels A."/>
            <person name="Clutterbuck D.R."/>
            <person name="Crowe M.L."/>
            <person name="Dalla E."/>
            <person name="Dalrymple B.P."/>
            <person name="de Bono B."/>
            <person name="Della Gatta G."/>
            <person name="di Bernardo D."/>
            <person name="Down T."/>
            <person name="Engstrom P."/>
            <person name="Fagiolini M."/>
            <person name="Faulkner G."/>
            <person name="Fletcher C.F."/>
            <person name="Fukushima T."/>
            <person name="Furuno M."/>
            <person name="Futaki S."/>
            <person name="Gariboldi M."/>
            <person name="Georgii-Hemming P."/>
            <person name="Gingeras T.R."/>
            <person name="Gojobori T."/>
            <person name="Green R.E."/>
            <person name="Gustincich S."/>
            <person name="Harbers M."/>
            <person name="Hayashi Y."/>
            <person name="Hensch T.K."/>
            <person name="Hirokawa N."/>
            <person name="Hill D."/>
            <person name="Huminiecki L."/>
            <person name="Iacono M."/>
            <person name="Ikeo K."/>
            <person name="Iwama A."/>
            <person name="Ishikawa T."/>
            <person name="Jakt M."/>
            <person name="Kanapin A."/>
            <person name="Katoh M."/>
            <person name="Kawasawa Y."/>
            <person name="Kelso J."/>
            <person name="Kitamura H."/>
            <person name="Kitano H."/>
            <person name="Kollias G."/>
            <person name="Krishnan S.P."/>
            <person name="Kruger A."/>
            <person name="Kummerfeld S.K."/>
            <person name="Kurochkin I.V."/>
            <person name="Lareau L.F."/>
            <person name="Lazarevic D."/>
            <person name="Lipovich L."/>
            <person name="Liu J."/>
            <person name="Liuni S."/>
            <person name="McWilliam S."/>
            <person name="Madan Babu M."/>
            <person name="Madera M."/>
            <person name="Marchionni L."/>
            <person name="Matsuda H."/>
            <person name="Matsuzawa S."/>
            <person name="Miki H."/>
            <person name="Mignone F."/>
            <person name="Miyake S."/>
            <person name="Morris K."/>
            <person name="Mottagui-Tabar S."/>
            <person name="Mulder N."/>
            <person name="Nakano N."/>
            <person name="Nakauchi H."/>
            <person name="Ng P."/>
            <person name="Nilsson R."/>
            <person name="Nishiguchi S."/>
            <person name="Nishikawa S."/>
            <person name="Nori F."/>
            <person name="Ohara O."/>
            <person name="Okazaki Y."/>
            <person name="Orlando V."/>
            <person name="Pang K.C."/>
            <person name="Pavan W.J."/>
            <person name="Pavesi G."/>
            <person name="Pesole G."/>
            <person name="Petrovsky N."/>
            <person name="Piazza S."/>
            <person name="Reed J."/>
            <person name="Reid J.F."/>
            <person name="Ring B.Z."/>
            <person name="Ringwald M."/>
            <person name="Rost B."/>
            <person name="Ruan Y."/>
            <person name="Salzberg S.L."/>
            <person name="Sandelin A."/>
            <person name="Schneider C."/>
            <person name="Schoenbach C."/>
            <person name="Sekiguchi K."/>
            <person name="Semple C.A."/>
            <person name="Seno S."/>
            <person name="Sessa L."/>
            <person name="Sheng Y."/>
            <person name="Shibata Y."/>
            <person name="Shimada H."/>
            <person name="Shimada K."/>
            <person name="Silva D."/>
            <person name="Sinclair B."/>
            <person name="Sperling S."/>
            <person name="Stupka E."/>
            <person name="Sugiura K."/>
            <person name="Sultana R."/>
            <person name="Takenaka Y."/>
            <person name="Taki K."/>
            <person name="Tammoja K."/>
            <person name="Tan S.L."/>
            <person name="Tang S."/>
            <person name="Taylor M.S."/>
            <person name="Tegner J."/>
            <person name="Teichmann S.A."/>
            <person name="Ueda H.R."/>
            <person name="van Nimwegen E."/>
            <person name="Verardo R."/>
            <person name="Wei C.L."/>
            <person name="Yagi K."/>
            <person name="Yamanishi H."/>
            <person name="Zabarovsky E."/>
            <person name="Zhu S."/>
            <person name="Zimmer A."/>
            <person name="Hide W."/>
            <person name="Bult C."/>
            <person name="Grimmond S.M."/>
            <person name="Teasdale R.D."/>
            <person name="Liu E.T."/>
            <person name="Brusic V."/>
            <person name="Quackenbush J."/>
            <person name="Wahlestedt C."/>
            <person name="Mattick J.S."/>
            <person name="Hume D.A."/>
            <person name="Kai C."/>
            <person name="Sasaki D."/>
            <person name="Tomaru Y."/>
            <person name="Fukuda S."/>
            <person name="Kanamori-Katayama M."/>
            <person name="Suzuki M."/>
            <person name="Aoki J."/>
            <person name="Arakawa T."/>
            <person name="Iida J."/>
            <person name="Imamura K."/>
            <person name="Itoh M."/>
            <person name="Kato T."/>
            <person name="Kawaji H."/>
            <person name="Kawagashira N."/>
            <person name="Kawashima T."/>
            <person name="Kojima M."/>
            <person name="Kondo S."/>
            <person name="Konno H."/>
            <person name="Nakano K."/>
            <person name="Ninomiya N."/>
            <person name="Nishio T."/>
            <person name="Okada M."/>
            <person name="Plessy C."/>
            <person name="Shibata K."/>
            <person name="Shiraki T."/>
            <person name="Suzuki S."/>
            <person name="Tagami M."/>
            <person name="Waki K."/>
            <person name="Watahiki A."/>
            <person name="Okamura-Oho Y."/>
            <person name="Suzuki H."/>
            <person name="Kawai J."/>
            <person name="Hayashizaki Y."/>
        </authorList>
    </citation>
    <scope>NUCLEOTIDE SEQUENCE [LARGE SCALE MRNA]</scope>
    <source>
        <strain>C57BL/6J</strain>
        <tissue>Medulla oblongata</tissue>
        <tissue>Testis</tissue>
    </source>
</reference>
<reference key="3">
    <citation type="submission" date="2005-08" db="EMBL/GenBank/DDBJ databases">
        <authorList>
            <person name="Mural R.J."/>
            <person name="Adams M.D."/>
            <person name="Myers E.W."/>
            <person name="Smith H.O."/>
            <person name="Venter J.C."/>
        </authorList>
    </citation>
    <scope>NUCLEOTIDE SEQUENCE [LARGE SCALE GENOMIC DNA]</scope>
</reference>
<reference key="4">
    <citation type="journal article" date="2004" name="Genome Res.">
        <title>The status, quality, and expansion of the NIH full-length cDNA project: the Mammalian Gene Collection (MGC).</title>
        <authorList>
            <consortium name="The MGC Project Team"/>
        </authorList>
    </citation>
    <scope>NUCLEOTIDE SEQUENCE [LARGE SCALE MRNA]</scope>
    <source>
        <tissue>Brain</tissue>
    </source>
</reference>
<reference key="5">
    <citation type="journal article" date="2001" name="Nat. Genet.">
        <title>An abundance of X-linked genes expressed in spermatogonia.</title>
        <authorList>
            <person name="Wang P.J."/>
            <person name="McCarrey J.R."/>
            <person name="Yang F."/>
            <person name="Page D.C."/>
        </authorList>
    </citation>
    <scope>NUCLEOTIDE SEQUENCE [MRNA] OF 359-971</scope>
    <scope>TISSUE SPECIFICITY</scope>
    <source>
        <tissue>Testis</tissue>
    </source>
</reference>
<reference key="6">
    <citation type="journal article" date="2003" name="Genomics">
        <title>Identification of eight members of the Argonaute family in the human genome.</title>
        <authorList>
            <person name="Sasaki T."/>
            <person name="Shiohama A."/>
            <person name="Minoshima S."/>
            <person name="Shimizu N."/>
        </authorList>
    </citation>
    <scope>TISSUE SPECIFICITY</scope>
</reference>
<reference key="7">
    <citation type="journal article" date="2004" name="Development">
        <title>Mili, a mammalian member of piwi family gene, is essential for spermatogenesis.</title>
        <authorList>
            <person name="Kuramochi-Miyagawa S."/>
            <person name="Kimura T."/>
            <person name="Ijiri T.W."/>
            <person name="Isobe T."/>
            <person name="Asada N."/>
            <person name="Fujita Y."/>
            <person name="Ikawa M."/>
            <person name="Iwai N."/>
            <person name="Okabe M."/>
            <person name="Deng W."/>
            <person name="Lin H."/>
            <person name="Matsuda Y."/>
            <person name="Nakano T."/>
        </authorList>
    </citation>
    <scope>FUNCTION</scope>
    <scope>INTERACTION WITH DDX4</scope>
    <scope>DISRUPTION PHENOTYPE</scope>
</reference>
<reference key="8">
    <citation type="journal article" date="2006" name="Mol. Reprod. Dev.">
        <title>Stem cell protein Piwil2 modulates expression of murine spermatogonial stem cell expressed genes.</title>
        <authorList>
            <person name="Lee J.H."/>
            <person name="Engel W."/>
            <person name="Nayernia K."/>
        </authorList>
    </citation>
    <scope>FUNCTION</scope>
</reference>
<reference key="9">
    <citation type="journal article" date="2006" name="Nature">
        <title>A novel class of small RNAs bind to MILI protein in mouse testes.</title>
        <authorList>
            <person name="Aravin A."/>
            <person name="Gaidatzis D."/>
            <person name="Pfeffer S."/>
            <person name="Lagos-Quintana M."/>
            <person name="Landgraf P."/>
            <person name="Iovino N."/>
            <person name="Morris P."/>
            <person name="Brownstein M.J."/>
            <person name="Kuramochi-Miyagawa S."/>
            <person name="Nakano T."/>
            <person name="Chien M."/>
            <person name="Russo J.J."/>
            <person name="Ju J."/>
            <person name="Sheridan R."/>
            <person name="Sander C."/>
            <person name="Zavolan M."/>
            <person name="Tuschl T."/>
        </authorList>
    </citation>
    <scope>RNA-BINDING</scope>
</reference>
<reference key="10">
    <citation type="journal article" date="2006" name="Hum. Mol. Genet.">
        <title>Mouse MAELSTROM: the link between meiotic silencing of unsynapsed chromatin and microRNA pathway?</title>
        <authorList>
            <person name="Costa Y."/>
            <person name="Speed R.M."/>
            <person name="Gautier P."/>
            <person name="Semple C.A."/>
            <person name="Maratou K."/>
            <person name="Turner J.M.A."/>
            <person name="Cooke H.J."/>
        </authorList>
    </citation>
    <scope>INTERACTION WITH MAEL</scope>
</reference>
<reference key="11">
    <citation type="journal article" date="2007" name="Science">
        <title>Developmentally regulated piRNA clusters implicate MILI in transposon control.</title>
        <authorList>
            <person name="Aravin A.A."/>
            <person name="Sachidanandam R."/>
            <person name="Girard A."/>
            <person name="Fejes-Toth K."/>
            <person name="Hannon G.J."/>
        </authorList>
    </citation>
    <scope>FUNCTION</scope>
    <scope>DISRUPTION PHENOTYPE</scope>
</reference>
<reference key="12">
    <citation type="journal article" date="2008" name="Genes Dev.">
        <title>DNA methylation of retrotransposon genes is regulated by Piwi family members MILI and MIWI2 in murine fetal testes.</title>
        <authorList>
            <person name="Kuramochi-Miyagawa S."/>
            <person name="Watanabe T."/>
            <person name="Gotoh K."/>
            <person name="Totoki Y."/>
            <person name="Toyoda A."/>
            <person name="Ikawa M."/>
            <person name="Asada N."/>
            <person name="Kojima K."/>
            <person name="Yamaguchi Y."/>
            <person name="Ijiri T.W."/>
            <person name="Hata K."/>
            <person name="Li E."/>
            <person name="Matsuda Y."/>
            <person name="Kimura T."/>
            <person name="Okabe M."/>
            <person name="Sakaki Y."/>
            <person name="Sasaki H."/>
            <person name="Nakano T."/>
        </authorList>
    </citation>
    <scope>FUNCTION</scope>
    <scope>DISRUPTION PHENOTYPE</scope>
</reference>
<reference key="13">
    <citation type="journal article" date="2008" name="Nature">
        <title>Endogenous siRNAs from naturally formed dsRNAs regulate transcripts in mouse oocytes.</title>
        <authorList>
            <person name="Watanabe T."/>
            <person name="Totoki Y."/>
            <person name="Toyoda A."/>
            <person name="Kaneda M."/>
            <person name="Kuramochi-Miyagawa S."/>
            <person name="Obata Y."/>
            <person name="Chiba H."/>
            <person name="Kohara Y."/>
            <person name="Kono T."/>
            <person name="Nakano T."/>
            <person name="Surani M.A."/>
            <person name="Sakaki Y."/>
            <person name="Sasaki H."/>
        </authorList>
    </citation>
    <scope>RNA-BINDING</scope>
    <scope>TISSUE SPECIFICITY</scope>
</reference>
<reference key="14">
    <citation type="journal article" date="2008" name="Mol. Cell">
        <title>A piRNA pathway primed by individual transposons is linked to de novo DNA methylation in mice.</title>
        <authorList>
            <person name="Aravin A.A."/>
            <person name="Sachidanandam R."/>
            <person name="Bourc'his D."/>
            <person name="Schaefer C."/>
            <person name="Pezic D."/>
            <person name="Toth K.F."/>
            <person name="Bestor T."/>
            <person name="Hannon G.J."/>
        </authorList>
    </citation>
    <scope>FUNCTION</scope>
    <scope>RNA-BINDING</scope>
    <scope>SUBCELLULAR LOCATION</scope>
    <scope>TISSUE SPECIFICITY</scope>
</reference>
<reference key="15">
    <citation type="journal article" date="2009" name="Curr. Biol.">
        <title>Mili interacts with tudor domain-containing protein 1 in regulating spermatogenesis.</title>
        <authorList>
            <person name="Wang J."/>
            <person name="Saxe J.P."/>
            <person name="Tanaka T."/>
            <person name="Chuma S."/>
            <person name="Lin H."/>
        </authorList>
    </citation>
    <scope>INTERACTION WITH TDRD1</scope>
</reference>
<reference key="16">
    <citation type="journal article" date="2009" name="Genes Dev.">
        <title>Proteomic analysis of murine Piwi proteins reveals a role for arginine methylation in specifying interaction with Tudor family members.</title>
        <authorList>
            <person name="Vagin V.V."/>
            <person name="Wohlschlegel J."/>
            <person name="Qu J."/>
            <person name="Jonsson Z."/>
            <person name="Huang X."/>
            <person name="Chuma S."/>
            <person name="Girard A."/>
            <person name="Sachidanandam R."/>
            <person name="Hannon G.J."/>
            <person name="Aravin A.A."/>
        </authorList>
    </citation>
    <scope>METHYLATION AT ARG-74; ARG-95; ARG-100; ARG-163 AND ARG-549</scope>
    <scope>SUBCELLULAR LOCATION</scope>
    <scope>INTERACTION WITH TDRD1; PRMT5 AND WDR77</scope>
    <scope>MUTAGENESIS OF ARG-9; ARG-39; ARG-45 AND ARG-74</scope>
</reference>
<reference key="17">
    <citation type="journal article" date="2009" name="J. Biol. Chem.">
        <title>MILI, a PIWI-interacting RNA-binding protein, is required for germ Line stem cell self-renewal and appears to positively regulate translation.</title>
        <authorList>
            <person name="Unhavaithaya Y."/>
            <person name="Hao Y."/>
            <person name="Beyret E."/>
            <person name="Yin H."/>
            <person name="Kuramochi-Miyagawa S."/>
            <person name="Nakano T."/>
            <person name="Lin H."/>
        </authorList>
    </citation>
    <scope>FUNCTION</scope>
    <scope>SUBCELLULAR LOCATION</scope>
    <scope>TISSUE SPECIFICITY</scope>
    <scope>INTERACTION WITH EIF3A; EIF4E AND EIF4G</scope>
</reference>
<reference key="18">
    <citation type="journal article" date="2009" name="Nat. Cell Biol.">
        <title>Arginine methylation of Piwi proteins catalysed by dPRMT5 is required for Ago3 and Aub stability.</title>
        <authorList>
            <person name="Kirino Y."/>
            <person name="Kim N."/>
            <person name="de Planell-Saguer M."/>
            <person name="Khandros E."/>
            <person name="Chiorean S."/>
            <person name="Klein P.S."/>
            <person name="Rigoutsos I."/>
            <person name="Jongens T.A."/>
            <person name="Mourelatos Z."/>
        </authorList>
    </citation>
    <scope>IDENTIFICATION BY MASS SPECTROMETRY</scope>
    <scope>TISSUE SPECIFICITY</scope>
    <scope>METHYLATION</scope>
</reference>
<reference key="19">
    <citation type="journal article" date="2009" name="Nat. Struct. Mol. Biol.">
        <title>Loss of the Mili-interacting Tudor domain-containing protein-1 activates transposons and alters the Mili-associated small RNA profile.</title>
        <authorList>
            <person name="Reuter M."/>
            <person name="Chuma S."/>
            <person name="Tanaka T."/>
            <person name="Franz T."/>
            <person name="Stark A."/>
            <person name="Pillai R.S."/>
        </authorList>
    </citation>
    <scope>METHYLATION AT ARG-74</scope>
    <scope>SUBCELLULAR LOCATION</scope>
    <scope>INTERACTION WITH TDRD1</scope>
</reference>
<reference key="20">
    <citation type="journal article" date="2009" name="Proc. Natl. Acad. Sci. U.S.A.">
        <title>Mouse Piwi interactome identifies binding mechanism of Tdrkh Tudor domain to arginine methylated Miwi.</title>
        <authorList>
            <person name="Chen C."/>
            <person name="Jin J."/>
            <person name="James D.A."/>
            <person name="Adams-Cioaba M.A."/>
            <person name="Park J.G."/>
            <person name="Guo Y."/>
            <person name="Tenaglia E."/>
            <person name="Xu C."/>
            <person name="Gish G."/>
            <person name="Min J."/>
            <person name="Pawson T."/>
        </authorList>
    </citation>
    <scope>METHYLATION AT ARG-45; ARG-74; ARG-83; ARG-95; ARG-100; ARG-144; ARG-156 AND ARG-163</scope>
    <scope>INTERACTION WITH TDRKH</scope>
</reference>
<reference key="21">
    <citation type="journal article" date="2010" name="Cell">
        <title>A tissue-specific atlas of mouse protein phosphorylation and expression.</title>
        <authorList>
            <person name="Huttlin E.L."/>
            <person name="Jedrychowski M.P."/>
            <person name="Elias J.E."/>
            <person name="Goswami T."/>
            <person name="Rad R."/>
            <person name="Beausoleil S.A."/>
            <person name="Villen J."/>
            <person name="Haas W."/>
            <person name="Sowa M.E."/>
            <person name="Gygi S.P."/>
        </authorList>
    </citation>
    <scope>IDENTIFICATION BY MASS SPECTROMETRY [LARGE SCALE ANALYSIS]</scope>
    <source>
        <tissue>Testis</tissue>
    </source>
</reference>
<reference key="22">
    <citation type="journal article" date="2010" name="Genes Dev.">
        <title>MVH in piRNA processing and gene silencing of retrotransposons.</title>
        <authorList>
            <person name="Kuramochi-Miyagawa S."/>
            <person name="Watanabe T."/>
            <person name="Gotoh K."/>
            <person name="Takamatsu K."/>
            <person name="Chuma S."/>
            <person name="Kojima-Kita K."/>
            <person name="Shiromoto Y."/>
            <person name="Asada N."/>
            <person name="Toyoda A."/>
            <person name="Fujiyama A."/>
            <person name="Totoki Y."/>
            <person name="Shibata T."/>
            <person name="Kimura T."/>
            <person name="Nakatsuji N."/>
            <person name="Noce T."/>
            <person name="Sasaki H."/>
            <person name="Nakano T."/>
        </authorList>
    </citation>
    <scope>SUBCELLULAR LOCATION</scope>
</reference>
<reference key="23">
    <citation type="journal article" date="2010" name="Proc. Natl. Acad. Sci. U.S.A.">
        <title>Mouse MOV10L1 associates with Piwi proteins and is an essential component of the Piwi-interacting RNA (piRNA) pathway.</title>
        <authorList>
            <person name="Zheng K."/>
            <person name="Xiol J."/>
            <person name="Reuter M."/>
            <person name="Eckardt S."/>
            <person name="Leu N.A."/>
            <person name="McLaughlin K.J."/>
            <person name="Stark A."/>
            <person name="Sachidanandam R."/>
            <person name="Pillai R.S."/>
            <person name="Wang P.J."/>
        </authorList>
    </citation>
    <scope>INTERACTION WITH MOV10L1</scope>
</reference>
<reference key="24">
    <citation type="journal article" date="2010" name="Proc. Natl. Acad. Sci. U.S.A.">
        <title>MOV10L1 is necessary for protection of spermatocytes against retrotransposons by Piwi-interacting RNAs.</title>
        <authorList>
            <person name="Frost R.J."/>
            <person name="Hamra F.K."/>
            <person name="Richardson J.A."/>
            <person name="Qi X."/>
            <person name="Bassel-Duby R."/>
            <person name="Olson E.N."/>
        </authorList>
    </citation>
    <scope>INTERACTION WITH MOV10L1</scope>
</reference>
<reference key="25">
    <citation type="journal article" date="2011" name="Nature">
        <title>The endonuclease activity of Mili fuels piRNA amplification that silences LINE1 elements.</title>
        <authorList>
            <person name="De Fazio S."/>
            <person name="Bartonicek N."/>
            <person name="Di Giacomo M."/>
            <person name="Abreu-Goodger C."/>
            <person name="Sankar A."/>
            <person name="Funaya C."/>
            <person name="Antony C."/>
            <person name="Moreira P.N."/>
            <person name="Enright A.J."/>
            <person name="O'Carroll D."/>
        </authorList>
    </citation>
    <scope>FUNCTION</scope>
    <scope>MUTAGENESIS OF ASP-813</scope>
</reference>
<reference key="26">
    <citation type="journal article" date="2013" name="Proc. Natl. Acad. Sci. U.S.A.">
        <title>Tudor domain containing 12 (TDRD12) is essential for secondary PIWI interacting RNA biogenesis in mice.</title>
        <authorList>
            <person name="Pandey R.R."/>
            <person name="Tokuzawa Y."/>
            <person name="Yang Z."/>
            <person name="Hayashi E."/>
            <person name="Ichisaka T."/>
            <person name="Kajita S."/>
            <person name="Asano Y."/>
            <person name="Kunieda T."/>
            <person name="Sachidanandam R."/>
            <person name="Chuma S."/>
            <person name="Yamanaka S."/>
            <person name="Pillai R.S."/>
        </authorList>
    </citation>
    <scope>INTERACTION WITH TDRD12</scope>
</reference>
<reference key="27">
    <citation type="journal article" date="2013" name="Mol. Cell">
        <title>Multiple epigenetic mechanisms and the piRNA pathway enforce LINE1 silencing during adult spermatogenesis.</title>
        <authorList>
            <person name="Di Giacomo M."/>
            <person name="Comazzetto S."/>
            <person name="Saini H."/>
            <person name="De Fazio S."/>
            <person name="Carrieri C."/>
            <person name="Morgan M."/>
            <person name="Vasiliauskaite L."/>
            <person name="Benes V."/>
            <person name="Enright A.J."/>
            <person name="O'Carroll D."/>
        </authorList>
    </citation>
    <scope>FUNCTION</scope>
    <scope>TISSUE SPECIFICITY</scope>
    <scope>MUTAGENESIS OF ASP-813</scope>
</reference>
<reference key="28">
    <citation type="journal article" date="2013" name="RNA">
        <title>GPAT2, a mitochondrial outer membrane protein, in piRNA biogenesis in germline stem cells.</title>
        <authorList>
            <person name="Shiromoto Y."/>
            <person name="Kuramochi-Miyagawa S."/>
            <person name="Daiba A."/>
            <person name="Chuma S."/>
            <person name="Katanaya A."/>
            <person name="Katsumata A."/>
            <person name="Nishimura K."/>
            <person name="Ohtaka M."/>
            <person name="Nakanishi M."/>
            <person name="Nakamura T."/>
            <person name="Yoshinaga K."/>
            <person name="Asada N."/>
            <person name="Nakamura S."/>
            <person name="Yasunaga T."/>
            <person name="Kojima-Kita K."/>
            <person name="Itou D."/>
            <person name="Kimura T."/>
            <person name="Nakano T."/>
        </authorList>
    </citation>
    <scope>INTERACTION WITH GPAT2</scope>
</reference>
<reference key="29">
    <citation type="journal article" date="2016" name="Mol. Cell">
        <title>PIWI slicing and EXD1 drive biogenesis of nuclear piRNAs from cytosolic targets of the mouse piRNA pathway.</title>
        <authorList>
            <person name="Yang Z."/>
            <person name="Chen K.M."/>
            <person name="Pandey R.R."/>
            <person name="Homolka D."/>
            <person name="Reuter M."/>
            <person name="Janeiro B.K."/>
            <person name="Sachidanandam R."/>
            <person name="Fauvarque M.O."/>
            <person name="McCarthy A.A."/>
            <person name="Pillai R.S."/>
        </authorList>
    </citation>
    <scope>FUNCTION</scope>
    <scope>IDENTIFICATION IN THE PET COMPLEX</scope>
</reference>
<reference key="30">
    <citation type="journal article" date="2017" name="Dev. Cell">
        <title>Distinct roles of RNA helicases MVH and TDRD9 in PIWI slicing-triggered mammalian piRNA biogenesis and function.</title>
        <authorList>
            <person name="Wenda J.M."/>
            <person name="Homolka D."/>
            <person name="Yang Z."/>
            <person name="Spinelli P."/>
            <person name="Sachidanandam R."/>
            <person name="Pandey R.R."/>
            <person name="Pillai R.S."/>
        </authorList>
    </citation>
    <scope>FUNCTION</scope>
</reference>
<reference key="31">
    <citation type="journal article" date="2017" name="J. Cell Sci.">
        <title>Tex19 paralogs are new members of the piRNA pathway controlling retrotransposon suppression.</title>
        <authorList>
            <person name="Tarabay Y."/>
            <person name="Achour M."/>
            <person name="Teletin M."/>
            <person name="Ye T."/>
            <person name="Teissandier A."/>
            <person name="Mark M."/>
            <person name="Bourc'his D."/>
            <person name="Viville S."/>
        </authorList>
    </citation>
    <scope>INTERACTION WITH TEX19.1</scope>
</reference>
<reference key="32">
    <citation type="journal article" date="2017" name="Oncotarget">
        <title>Cancer/testis antigen PIWIL2 suppresses circadian rhythms by regulating the stability and activity of BMAL1 and CLOCK.</title>
        <authorList>
            <person name="Lu Y."/>
            <person name="Zheng X."/>
            <person name="Hu W."/>
            <person name="Bian S."/>
            <person name="Zhang Z."/>
            <person name="Tao D."/>
            <person name="Liu Y."/>
            <person name="Ma Y."/>
        </authorList>
    </citation>
    <scope>FUNCTION</scope>
    <scope>INTERACTION WITH BMAL1; CLOCK AND GSK3B</scope>
    <scope>TISSUE SPECIFICITY</scope>
</reference>
<reference key="33">
    <citation type="journal article" date="2020" name="Genes Dev.">
        <title>TEX15 associates with MILI and silences transposable elements in male germ cells.</title>
        <authorList>
            <person name="Yang F."/>
            <person name="Lan Y."/>
            <person name="Pandey R.R."/>
            <person name="Homolka D."/>
            <person name="Berger S.L."/>
            <person name="Pillai R.S."/>
            <person name="Bartolomei M.S."/>
            <person name="Wang P.J."/>
        </authorList>
    </citation>
    <scope>INTERACTION WITH TEX15</scope>
    <scope>SUBCELLULAR LOCATION</scope>
    <scope>DEVELOPMENTAL STAGE</scope>
</reference>
<reference key="34">
    <citation type="journal article" date="2012" name="RNA">
        <title>The multiple Tudor domain-containing protein TDRD1 is a molecular scaffold for mouse Piwi proteins and piRNA biogenesis factors.</title>
        <authorList>
            <person name="Mathioudakis N."/>
            <person name="Palencia A."/>
            <person name="Kadlec J."/>
            <person name="Round A."/>
            <person name="Tripsianes K."/>
            <person name="Sattler M."/>
            <person name="Pillai R.S."/>
            <person name="Cusack S."/>
        </authorList>
    </citation>
    <scope>X-RAY CRYSTALLOGRAPHY (2.1 ANGSTROMS) OF 38-50 IN COMPLEX WITH TDRD1</scope>
    <scope>SUBUNIT</scope>
    <scope>METHYLATION AT ARG-45 AND ARG-74</scope>
</reference>
<dbReference type="EC" id="3.1.26.-" evidence="25 28 30"/>
<dbReference type="EMBL" id="AB032605">
    <property type="protein sequence ID" value="BAA93706.1"/>
    <property type="molecule type" value="mRNA"/>
</dbReference>
<dbReference type="EMBL" id="AK030116">
    <property type="protein sequence ID" value="BAC26791.1"/>
    <property type="molecule type" value="mRNA"/>
</dbReference>
<dbReference type="EMBL" id="AK163647">
    <property type="protein sequence ID" value="BAE37436.1"/>
    <property type="molecule type" value="mRNA"/>
</dbReference>
<dbReference type="EMBL" id="CH466535">
    <property type="protein sequence ID" value="EDL35904.1"/>
    <property type="molecule type" value="Genomic_DNA"/>
</dbReference>
<dbReference type="EMBL" id="BC138444">
    <property type="protein sequence ID" value="AAI38445.1"/>
    <property type="molecule type" value="mRNA"/>
</dbReference>
<dbReference type="EMBL" id="BC145717">
    <property type="protein sequence ID" value="AAI45718.1"/>
    <property type="molecule type" value="mRNA"/>
</dbReference>
<dbReference type="EMBL" id="AF285586">
    <property type="protein sequence ID" value="AAK31965.1"/>
    <property type="status" value="ALT_INIT"/>
    <property type="molecule type" value="mRNA"/>
</dbReference>
<dbReference type="CCDS" id="CCDS27252.1"/>
<dbReference type="RefSeq" id="NP_067283.1">
    <property type="nucleotide sequence ID" value="NM_021308.2"/>
</dbReference>
<dbReference type="RefSeq" id="XP_006519392.1">
    <property type="nucleotide sequence ID" value="XM_006519329.4"/>
</dbReference>
<dbReference type="PDB" id="4B9W">
    <property type="method" value="X-ray"/>
    <property type="resolution" value="2.10 A"/>
    <property type="chains" value="P/S=38-50"/>
</dbReference>
<dbReference type="PDB" id="7YFY">
    <property type="method" value="EM"/>
    <property type="resolution" value="3.40 A"/>
    <property type="chains" value="A=209-971"/>
</dbReference>
<dbReference type="PDB" id="7YGN">
    <property type="method" value="EM"/>
    <property type="resolution" value="3.00 A"/>
    <property type="chains" value="A=209-971"/>
</dbReference>
<dbReference type="PDB" id="9IJ0">
    <property type="method" value="EM"/>
    <property type="resolution" value="3.20 A"/>
    <property type="chains" value="A=1-971"/>
</dbReference>
<dbReference type="PDB" id="9IJ1">
    <property type="method" value="EM"/>
    <property type="resolution" value="3.20 A"/>
    <property type="chains" value="A=1-971"/>
</dbReference>
<dbReference type="PDB" id="9IJ2">
    <property type="method" value="EM"/>
    <property type="resolution" value="3.90 A"/>
    <property type="chains" value="A=1-971"/>
</dbReference>
<dbReference type="PDB" id="9IJ3">
    <property type="method" value="EM"/>
    <property type="resolution" value="2.60 A"/>
    <property type="chains" value="A=1-971"/>
</dbReference>
<dbReference type="PDB" id="9IJ4">
    <property type="method" value="EM"/>
    <property type="resolution" value="2.70 A"/>
    <property type="chains" value="A=1-971"/>
</dbReference>
<dbReference type="PDB" id="9IJ5">
    <property type="method" value="EM"/>
    <property type="resolution" value="2.80 A"/>
    <property type="chains" value="A=1-971"/>
</dbReference>
<dbReference type="PDBsum" id="4B9W"/>
<dbReference type="PDBsum" id="7YFY"/>
<dbReference type="PDBsum" id="7YGN"/>
<dbReference type="PDBsum" id="9IJ0"/>
<dbReference type="PDBsum" id="9IJ1"/>
<dbReference type="PDBsum" id="9IJ2"/>
<dbReference type="PDBsum" id="9IJ3"/>
<dbReference type="PDBsum" id="9IJ4"/>
<dbReference type="PDBsum" id="9IJ5"/>
<dbReference type="EMDB" id="EMD-33801"/>
<dbReference type="EMDB" id="EMD-33817"/>
<dbReference type="EMDB" id="EMD-60611"/>
<dbReference type="EMDB" id="EMD-60612"/>
<dbReference type="EMDB" id="EMD-60613"/>
<dbReference type="EMDB" id="EMD-60614"/>
<dbReference type="EMDB" id="EMD-60615"/>
<dbReference type="EMDB" id="EMD-60616"/>
<dbReference type="SMR" id="Q8CDG1"/>
<dbReference type="BioGRID" id="208309">
    <property type="interactions" value="4"/>
</dbReference>
<dbReference type="CORUM" id="Q8CDG1"/>
<dbReference type="DIP" id="DIP-48522N"/>
<dbReference type="FunCoup" id="Q8CDG1">
    <property type="interactions" value="116"/>
</dbReference>
<dbReference type="IntAct" id="Q8CDG1">
    <property type="interactions" value="4"/>
</dbReference>
<dbReference type="MINT" id="Q8CDG1"/>
<dbReference type="STRING" id="10090.ENSMUSP00000047385"/>
<dbReference type="GlyGen" id="Q8CDG1">
    <property type="glycosylation" value="1 site"/>
</dbReference>
<dbReference type="iPTMnet" id="Q8CDG1"/>
<dbReference type="PhosphoSitePlus" id="Q8CDG1"/>
<dbReference type="SwissPalm" id="Q8CDG1"/>
<dbReference type="PaxDb" id="10090-ENSMUSP00000047385"/>
<dbReference type="ProteomicsDB" id="288175"/>
<dbReference type="Antibodypedia" id="22585">
    <property type="antibodies" value="268 antibodies from 35 providers"/>
</dbReference>
<dbReference type="DNASU" id="57746"/>
<dbReference type="Ensembl" id="ENSMUST00000048129.6">
    <property type="protein sequence ID" value="ENSMUSP00000047385.5"/>
    <property type="gene ID" value="ENSMUSG00000033644.6"/>
</dbReference>
<dbReference type="GeneID" id="57746"/>
<dbReference type="KEGG" id="mmu:57746"/>
<dbReference type="UCSC" id="uc007unx.1">
    <property type="organism name" value="mouse"/>
</dbReference>
<dbReference type="AGR" id="MGI:1930036"/>
<dbReference type="CTD" id="55124"/>
<dbReference type="MGI" id="MGI:1930036">
    <property type="gene designation" value="Piwil2"/>
</dbReference>
<dbReference type="VEuPathDB" id="HostDB:ENSMUSG00000033644"/>
<dbReference type="eggNOG" id="KOG1042">
    <property type="taxonomic scope" value="Eukaryota"/>
</dbReference>
<dbReference type="GeneTree" id="ENSGT00950000183200"/>
<dbReference type="HOGENOM" id="CLU_008813_0_0_1"/>
<dbReference type="InParanoid" id="Q8CDG1"/>
<dbReference type="OMA" id="CILNTAN"/>
<dbReference type="OrthoDB" id="445936at2759"/>
<dbReference type="PhylomeDB" id="Q8CDG1"/>
<dbReference type="TreeFam" id="TF354206"/>
<dbReference type="BioGRID-ORCS" id="57746">
    <property type="hits" value="3 hits in 78 CRISPR screens"/>
</dbReference>
<dbReference type="CD-CODE" id="DE1E139C">
    <property type="entry name" value="Chromatoid body"/>
</dbReference>
<dbReference type="ChiTaRS" id="Piwil2">
    <property type="organism name" value="mouse"/>
</dbReference>
<dbReference type="EvolutionaryTrace" id="Q8CDG1"/>
<dbReference type="PRO" id="PR:Q8CDG1"/>
<dbReference type="Proteomes" id="UP000000589">
    <property type="component" value="Chromosome 14"/>
</dbReference>
<dbReference type="RNAct" id="Q8CDG1">
    <property type="molecule type" value="protein"/>
</dbReference>
<dbReference type="Bgee" id="ENSMUSG00000033644">
    <property type="expression patterns" value="Expressed in spermatocyte and 83 other cell types or tissues"/>
</dbReference>
<dbReference type="ExpressionAtlas" id="Q8CDG1">
    <property type="expression patterns" value="baseline and differential"/>
</dbReference>
<dbReference type="GO" id="GO:0033391">
    <property type="term" value="C:chromatoid body"/>
    <property type="evidence" value="ECO:0000314"/>
    <property type="project" value="UniProtKB"/>
</dbReference>
<dbReference type="GO" id="GO:0005737">
    <property type="term" value="C:cytoplasm"/>
    <property type="evidence" value="ECO:0000314"/>
    <property type="project" value="UniProtKB"/>
</dbReference>
<dbReference type="GO" id="GO:0005829">
    <property type="term" value="C:cytosol"/>
    <property type="evidence" value="ECO:0000304"/>
    <property type="project" value="Reactome"/>
</dbReference>
<dbReference type="GO" id="GO:0097433">
    <property type="term" value="C:dense body"/>
    <property type="evidence" value="ECO:0000314"/>
    <property type="project" value="MGI"/>
</dbReference>
<dbReference type="GO" id="GO:0005634">
    <property type="term" value="C:nucleus"/>
    <property type="evidence" value="ECO:0000314"/>
    <property type="project" value="MGI"/>
</dbReference>
<dbReference type="GO" id="GO:0043186">
    <property type="term" value="C:P granule"/>
    <property type="evidence" value="ECO:0000314"/>
    <property type="project" value="UniProtKB"/>
</dbReference>
<dbReference type="GO" id="GO:0010370">
    <property type="term" value="C:perinucleolar chromocenter"/>
    <property type="evidence" value="ECO:0000314"/>
    <property type="project" value="MGI"/>
</dbReference>
<dbReference type="GO" id="GO:1990923">
    <property type="term" value="C:PET complex"/>
    <property type="evidence" value="ECO:0000314"/>
    <property type="project" value="UniProtKB"/>
</dbReference>
<dbReference type="GO" id="GO:0071546">
    <property type="term" value="C:pi-body"/>
    <property type="evidence" value="ECO:0000314"/>
    <property type="project" value="UniProtKB"/>
</dbReference>
<dbReference type="GO" id="GO:0046872">
    <property type="term" value="F:metal ion binding"/>
    <property type="evidence" value="ECO:0007669"/>
    <property type="project" value="UniProtKB-KW"/>
</dbReference>
<dbReference type="GO" id="GO:0003729">
    <property type="term" value="F:mRNA binding"/>
    <property type="evidence" value="ECO:0000314"/>
    <property type="project" value="UniProtKB"/>
</dbReference>
<dbReference type="GO" id="GO:0034584">
    <property type="term" value="F:piRNA binding"/>
    <property type="evidence" value="ECO:0000314"/>
    <property type="project" value="UniProtKB"/>
</dbReference>
<dbReference type="GO" id="GO:0004521">
    <property type="term" value="F:RNA endonuclease activity"/>
    <property type="evidence" value="ECO:0000314"/>
    <property type="project" value="UniProtKB"/>
</dbReference>
<dbReference type="GO" id="GO:0030718">
    <property type="term" value="P:germ-line stem cell population maintenance"/>
    <property type="evidence" value="ECO:0000315"/>
    <property type="project" value="UniProtKB"/>
</dbReference>
<dbReference type="GO" id="GO:0051321">
    <property type="term" value="P:meiotic cell cycle"/>
    <property type="evidence" value="ECO:0007669"/>
    <property type="project" value="UniProtKB-KW"/>
</dbReference>
<dbReference type="GO" id="GO:0042754">
    <property type="term" value="P:negative regulation of circadian rhythm"/>
    <property type="evidence" value="ECO:0000315"/>
    <property type="project" value="UniProtKB"/>
</dbReference>
<dbReference type="GO" id="GO:0048477">
    <property type="term" value="P:oogenesis"/>
    <property type="evidence" value="ECO:0000270"/>
    <property type="project" value="UniProtKB"/>
</dbReference>
<dbReference type="GO" id="GO:0034587">
    <property type="term" value="P:piRNA processing"/>
    <property type="evidence" value="ECO:0000314"/>
    <property type="project" value="UniProtKB"/>
</dbReference>
<dbReference type="GO" id="GO:0140991">
    <property type="term" value="P:piRNA-mediated gene silencing by mRNA destabilization"/>
    <property type="evidence" value="ECO:0000315"/>
    <property type="project" value="FlyBase"/>
</dbReference>
<dbReference type="GO" id="GO:2000767">
    <property type="term" value="P:positive regulation of cytoplasmic translation"/>
    <property type="evidence" value="ECO:0000315"/>
    <property type="project" value="UniProtKB"/>
</dbReference>
<dbReference type="GO" id="GO:0060903">
    <property type="term" value="P:positive regulation of meiosis I"/>
    <property type="evidence" value="ECO:0000315"/>
    <property type="project" value="MGI"/>
</dbReference>
<dbReference type="GO" id="GO:0031047">
    <property type="term" value="P:regulatory ncRNA-mediated gene silencing"/>
    <property type="evidence" value="ECO:0000315"/>
    <property type="project" value="UniProtKB"/>
</dbReference>
<dbReference type="GO" id="GO:0048511">
    <property type="term" value="P:rhythmic process"/>
    <property type="evidence" value="ECO:0007669"/>
    <property type="project" value="UniProtKB-KW"/>
</dbReference>
<dbReference type="GO" id="GO:0140965">
    <property type="term" value="P:secondary piRNA processing"/>
    <property type="evidence" value="ECO:0000314"/>
    <property type="project" value="UniProtKB"/>
</dbReference>
<dbReference type="GO" id="GO:0007283">
    <property type="term" value="P:spermatogenesis"/>
    <property type="evidence" value="ECO:0000315"/>
    <property type="project" value="UniProtKB"/>
</dbReference>
<dbReference type="GO" id="GO:0141005">
    <property type="term" value="P:transposable element silencing by heterochromatin formation"/>
    <property type="evidence" value="ECO:0000315"/>
    <property type="project" value="UniProtKB"/>
</dbReference>
<dbReference type="GO" id="GO:0141008">
    <property type="term" value="P:transposable element silencing by mRNA destabilization"/>
    <property type="evidence" value="ECO:0000315"/>
    <property type="project" value="UniProtKB"/>
</dbReference>
<dbReference type="GO" id="GO:0141196">
    <property type="term" value="P:transposable element silencing by piRNA-mediated DNA methylation"/>
    <property type="evidence" value="ECO:0000315"/>
    <property type="project" value="UniProtKB"/>
</dbReference>
<dbReference type="GO" id="GO:0141006">
    <property type="term" value="P:transposable element silencing by piRNA-mediated heterochromatin formation"/>
    <property type="evidence" value="ECO:0000315"/>
    <property type="project" value="UniProtKB"/>
</dbReference>
<dbReference type="CDD" id="cd02845">
    <property type="entry name" value="PAZ_piwi_like"/>
    <property type="match status" value="1"/>
</dbReference>
<dbReference type="CDD" id="cd04658">
    <property type="entry name" value="Piwi_piwi-like_Euk"/>
    <property type="match status" value="1"/>
</dbReference>
<dbReference type="FunFam" id="3.40.50.2300:FF:000141">
    <property type="entry name" value="piwi-like protein 2 isoform X1"/>
    <property type="match status" value="1"/>
</dbReference>
<dbReference type="FunFam" id="3.30.420.10:FF:000014">
    <property type="entry name" value="Piwi-like RNA-mediated gene silencing 1"/>
    <property type="match status" value="1"/>
</dbReference>
<dbReference type="FunFam" id="2.170.260.10:FF:000003">
    <property type="entry name" value="Piwi-like RNA-mediated gene silencing 2"/>
    <property type="match status" value="1"/>
</dbReference>
<dbReference type="Gene3D" id="3.40.50.2300">
    <property type="match status" value="1"/>
</dbReference>
<dbReference type="Gene3D" id="2.170.260.10">
    <property type="entry name" value="paz domain"/>
    <property type="match status" value="1"/>
</dbReference>
<dbReference type="Gene3D" id="3.30.420.10">
    <property type="entry name" value="Ribonuclease H-like superfamily/Ribonuclease H"/>
    <property type="match status" value="1"/>
</dbReference>
<dbReference type="InterPro" id="IPR014811">
    <property type="entry name" value="ArgoL1"/>
</dbReference>
<dbReference type="InterPro" id="IPR003100">
    <property type="entry name" value="PAZ_dom"/>
</dbReference>
<dbReference type="InterPro" id="IPR036085">
    <property type="entry name" value="PAZ_dom_sf"/>
</dbReference>
<dbReference type="InterPro" id="IPR003165">
    <property type="entry name" value="Piwi"/>
</dbReference>
<dbReference type="InterPro" id="IPR012337">
    <property type="entry name" value="RNaseH-like_sf"/>
</dbReference>
<dbReference type="InterPro" id="IPR036397">
    <property type="entry name" value="RNaseH_sf"/>
</dbReference>
<dbReference type="PANTHER" id="PTHR22891">
    <property type="entry name" value="EUKARYOTIC TRANSLATION INITIATION FACTOR 2C"/>
    <property type="match status" value="1"/>
</dbReference>
<dbReference type="Pfam" id="PF08699">
    <property type="entry name" value="ArgoL1"/>
    <property type="match status" value="1"/>
</dbReference>
<dbReference type="Pfam" id="PF02170">
    <property type="entry name" value="PAZ"/>
    <property type="match status" value="1"/>
</dbReference>
<dbReference type="Pfam" id="PF02171">
    <property type="entry name" value="Piwi"/>
    <property type="match status" value="1"/>
</dbReference>
<dbReference type="Pfam" id="PF23278">
    <property type="entry name" value="Piwi_N"/>
    <property type="match status" value="1"/>
</dbReference>
<dbReference type="SMART" id="SM01163">
    <property type="entry name" value="DUF1785"/>
    <property type="match status" value="1"/>
</dbReference>
<dbReference type="SMART" id="SM00949">
    <property type="entry name" value="PAZ"/>
    <property type="match status" value="1"/>
</dbReference>
<dbReference type="SMART" id="SM00950">
    <property type="entry name" value="Piwi"/>
    <property type="match status" value="1"/>
</dbReference>
<dbReference type="SUPFAM" id="SSF101690">
    <property type="entry name" value="PAZ domain"/>
    <property type="match status" value="1"/>
</dbReference>
<dbReference type="SUPFAM" id="SSF53098">
    <property type="entry name" value="Ribonuclease H-like"/>
    <property type="match status" value="1"/>
</dbReference>
<dbReference type="PROSITE" id="PS50821">
    <property type="entry name" value="PAZ"/>
    <property type="match status" value="1"/>
</dbReference>
<dbReference type="PROSITE" id="PS50822">
    <property type="entry name" value="PIWI"/>
    <property type="match status" value="1"/>
</dbReference>
<comment type="function">
    <text evidence="7 9 10 12 13 15 16 25 28 30 32 33">Endoribonuclease that plays a central role during spermatogenesis by repressing transposable elements and preventing their mobilization, which is essential for the germline integrity (PubMed:11578866, PubMed:14736746, PubMed:17446352, PubMed:18381894, PubMed:18922463, PubMed:26669262). Plays an essential role in meiotic differentiation of spermatocytes, germ cell differentiation and in self-renewal of spermatogonial stem cells (PubMed:11578866, PubMed:14736746, PubMed:17446352, PubMed:18381894, PubMed:18922463, PubMed:26669262). Its presence in oocytes suggests that it may participate in similar functions during oogenesis in females (PubMed:11578866, PubMed:14736746, PubMed:17446352, PubMed:18381894, PubMed:18922463, PubMed:26669262). Acts via the piRNA metabolic process, which mediates the repression of transposable elements during meiosis by forming complexes composed of piRNAs and Piwi proteins and govern the methylation and subsequent repression of transposons (PubMed:11578866, PubMed:14736746, PubMed:17446352, PubMed:18381894, PubMed:18922463, PubMed:26669262). During piRNA biosynthesis, plays a key role in the piRNA amplification loop, also named ping-pong amplification cycle, by acting as a 'slicer-competent' piRNA endoribonuclease that cleaves primary piRNAs, which are then loaded onto 'slicer-incompetent' PIWIL4 (PubMed:22020280, PubMed:23706823, PubMed:26669262). PIWIL2 slicing produces a pre-miRNA intermediate, which is then processed in mature piRNAs, and as well as a 16 nucleotide by-product that is degraded (PubMed:28633017). Required for PIWIL4/MIWI2 nuclear localization and association with secondary piRNAs antisense (PubMed:18381894, PubMed:18922463, PubMed:26669262). Besides their function in transposable elements repression, piRNAs are probably involved in other processes during meiosis such as translation regulation (PubMed:19114715). Indirectly modulates expression of genes such as PDGFRB, SLC2A1, ITGA6, GJA7, THY1, CD9 and STRA8 (PubMed:16261612). Represses circadian rhythms by promoting the stability and activity of core clock components BMAL1 and CLOCK by inhibiting GSK3B-mediated phosphorylation and ubiquitination-dependent degradation of these proteins (PubMed:28903391).</text>
</comment>
<comment type="cofactor">
    <cofactor evidence="2">
        <name>Mg(2+)</name>
        <dbReference type="ChEBI" id="CHEBI:18420"/>
    </cofactor>
</comment>
<comment type="subunit">
    <text evidence="9 11 16 17 19 20 21 23 24 26 27 29 30 31 33 34">Interacts with DDX4, MAEL, EIF3A, EIF4E, EIF4G, PRMT5 and WDR77. Associates with EIF4E- and EIF4G-containing m7G cap-binding complexes. Interacts (when methylated on arginine residues) with TDRD1 and TDRKH/TDRD2. Interacts with TDRD12 (PubMed:24067652). Component of the PET complex, at least composed of EXD1, PIWIL2, TDRD12 and piRNAs (PubMed:26669262). Interacts with MOV10L1 (PubMed:20534472, PubMed:20547853). Interacts with GPAT2 (PubMed:23611983). Interacts with Tex19.1 and, probably, Tex19.2 (PubMed:28254886). Interacts (via PIWI domain) with BMAL1 and CLOCK (PubMed:28903391). Interacts with GSK3B (PubMed:28903391). Interacts with TEX15 (PubMed:32381626).</text>
</comment>
<comment type="interaction">
    <interactant intactId="EBI-8573412">
        <id>Q8CDG1</id>
    </interactant>
    <interactant intactId="EBI-8573364">
        <id>Q99MV1</id>
        <label>Tdrd1</label>
    </interactant>
    <organismsDiffer>false</organismsDiffer>
    <experiments>6</experiments>
</comment>
<comment type="subcellular location">
    <subcellularLocation>
        <location evidence="7 15 16 19 20 22 34">Cytoplasm</location>
    </subcellularLocation>
    <text evidence="22">Present in chromatoid body. Probable component of the meiotic nuage, also named P granule, a germ-cell-specific organelle required to repress transposon activity during meiosis (PubMed:20439430).</text>
</comment>
<comment type="tissue specificity">
    <text evidence="6 7 8 14 15 16 18 28 33">Expressed in adult testis, specifically in spermatocytes and in spermatogonia (PubMed:11279525, PubMed:11578866, PubMed:12906857, PubMed:18404146, PubMed:18922463, PubMed:19114715, PubMed:19377467, PubMed:28903391). Only detected in primordial germ cells of both sexes. Widely expressed in tumors. Also present at early stages of oocyte growth. Present in the mitotic spermatogonia (PubMed:23706823). Not detected in the first stages of meiosis (preleptotene and leptotene) (PubMed:23706823). Detected at the late zygotene stage and increases throughout pachytene, declining from this stage onward until expression stops at the early round spermatid stage (at protein level) (PubMed:23706823).</text>
</comment>
<comment type="developmental stage">
    <text evidence="7 34">Expressed from 12.5 dpc until adult in male gonads. In female gonads, detected since 12.5 dpc, then begins to cease after birth and disappears until the development of adult ovary (PubMed:11578866). Highly expressed in embryonic male germ cells at embryonic day 16.5 and expression decreases by postnatal day 2.5 (PubMed:32381626).</text>
</comment>
<comment type="PTM">
    <text evidence="18 19 20 21 26">Arginine methylation by PRMT5 is required for the interaction with Tudor domain-containing protein TDRD1 and subsequent localization to the meiotic nuage, also named P granule.</text>
</comment>
<comment type="disruption phenotype">
    <text evidence="9 12 13">Mice exhibit blocked spermatogenesis at the early prophase of the first meiosis due to transposable elements derepression, and apoptosis occurs subsequently. Female mice are fertile, while male are sterile.</text>
</comment>
<comment type="similarity">
    <text evidence="37">Belongs to the argonaute family. Piwi subfamily.</text>
</comment>
<comment type="sequence caution" evidence="37">
    <conflict type="erroneous initiation">
        <sequence resource="EMBL-CDS" id="AAK31965"/>
    </conflict>
    <text>Truncated N-terminus.</text>
</comment>
<proteinExistence type="evidence at protein level"/>
<keyword id="KW-0002">3D-structure</keyword>
<keyword id="KW-0090">Biological rhythms</keyword>
<keyword id="KW-0963">Cytoplasm</keyword>
<keyword id="KW-0217">Developmental protein</keyword>
<keyword id="KW-0221">Differentiation</keyword>
<keyword id="KW-0255">Endonuclease</keyword>
<keyword id="KW-0378">Hydrolase</keyword>
<keyword id="KW-0469">Meiosis</keyword>
<keyword id="KW-0479">Metal-binding</keyword>
<keyword id="KW-0488">Methylation</keyword>
<keyword id="KW-0540">Nuclease</keyword>
<keyword id="KW-0896">Oogenesis</keyword>
<keyword id="KW-1185">Reference proteome</keyword>
<keyword id="KW-0694">RNA-binding</keyword>
<keyword id="KW-0943">RNA-mediated gene silencing</keyword>
<keyword id="KW-0744">Spermatogenesis</keyword>
<keyword id="KW-0810">Translation regulation</keyword>
<sequence>MDPVRPLFRGPTPVHPSQCVRMPGCWPQAPRPLEPAWGRAGPAGRGLVFRKPEDSSPPLQPVQKDSVGLVSMFRGMGLDTAFRPPSKREVPPLGRGVLGRGLSANMVRKDREEPRSSLPDPSVLAAGDSKLAEASVGWSRMLGRGSSEVSLLPLGRAASSIGRGMDKPPSAFGLTARDPPRLPQPPALSPTSLHSADPPPVLTMERKEKELLVKQGSKGTPQSLGLNLIKIQCHNEAVYQYHVTFSPSVECKSMRFGMLKDHQSVTGNVTAFDGSILYLPVKLQQVVELKSQRKTDDAEISIKIQLTKILEPCSDLCIPFYNVVFRRVMKLLDMKLVGRNFYDPTSAMVLQQHRLQIWPGYAASIRRTDGGLFLLADVSHKVIRNDSVLDVMHAIYQQNKEHFQDECSKLLVGSIVITRYNNRTYRIDDVDWNKTPKDSFVMSDGKEITFLEYYSKNYGITVKEDDQPLLIHRPSERQNNHGMLLKGEILLLPELSFMTGIPEKMKKDFRAMKDLTQQINLSPKQHHGALECLLQRISQNETASNELTRWGLSLHKDVHKIEGRLLPMERINLRNTSFVTSEDLNWVKEVTRDASILTIPMHFWALFYPKRAMDQARELVNMLEKIAGPIGMRISPPAWVELKDDRIETYIRTIQSLLGVEGKIQMVVCIIMGTRDDLYGAIKKLCCVQSPVPSQVINVRTIGQPTRLRSVAQKILLQMNCKLGGELWGVDIPLKQLMVIGMDVYHDPSRGMRSVVGFVASINLTLTKWYSRVVFQMPHQEIVDSLKLCLVGSLKKYYEVNHCLPEKIVVYRDGVSDGQLKTVANYEIPQLQKCFEAFDNYHPKMVVFVVQKKISTNLYLAAPDHFVTPSPGTVVDHTITSCEWVDFYLLAHHVRQGCGIPTHYICVLNTANLSPDHMQRLTFKLCHMYWNWPGTIRVPAPCKYAHKLAFLSGQILHHEPAIQLCGNLFFL</sequence>